<organism>
    <name type="scientific">Escherichia coli (strain K12)</name>
    <dbReference type="NCBI Taxonomy" id="83333"/>
    <lineage>
        <taxon>Bacteria</taxon>
        <taxon>Pseudomonadati</taxon>
        <taxon>Pseudomonadota</taxon>
        <taxon>Gammaproteobacteria</taxon>
        <taxon>Enterobacterales</taxon>
        <taxon>Enterobacteriaceae</taxon>
        <taxon>Escherichia</taxon>
    </lineage>
</organism>
<proteinExistence type="evidence at protein level"/>
<dbReference type="EMBL" id="X05173">
    <property type="protein sequence ID" value="CAA28808.1"/>
    <property type="molecule type" value="Genomic_DNA"/>
</dbReference>
<dbReference type="EMBL" id="L19201">
    <property type="protein sequence ID" value="AAB03002.1"/>
    <property type="molecule type" value="Genomic_DNA"/>
</dbReference>
<dbReference type="EMBL" id="U00096">
    <property type="protein sequence ID" value="AAC76865.1"/>
    <property type="molecule type" value="Genomic_DNA"/>
</dbReference>
<dbReference type="EMBL" id="AP009048">
    <property type="protein sequence ID" value="BAE77441.1"/>
    <property type="molecule type" value="Genomic_DNA"/>
</dbReference>
<dbReference type="EMBL" id="D16509">
    <property type="protein sequence ID" value="BAA03962.1"/>
    <property type="molecule type" value="Genomic_DNA"/>
</dbReference>
<dbReference type="PIR" id="B30377">
    <property type="entry name" value="RGECGG"/>
</dbReference>
<dbReference type="RefSeq" id="NP_418304.1">
    <property type="nucleotide sequence ID" value="NC_000913.3"/>
</dbReference>
<dbReference type="RefSeq" id="WP_001188777.1">
    <property type="nucleotide sequence ID" value="NZ_SSZK01000026.1"/>
</dbReference>
<dbReference type="BMRB" id="P0AFB8"/>
<dbReference type="SMR" id="P0AFB8"/>
<dbReference type="BioGRID" id="4262628">
    <property type="interactions" value="175"/>
</dbReference>
<dbReference type="BioGRID" id="852658">
    <property type="interactions" value="2"/>
</dbReference>
<dbReference type="DIP" id="DIP-9781N"/>
<dbReference type="FunCoup" id="P0AFB8">
    <property type="interactions" value="438"/>
</dbReference>
<dbReference type="IntAct" id="P0AFB8">
    <property type="interactions" value="6"/>
</dbReference>
<dbReference type="STRING" id="511145.b3868"/>
<dbReference type="jPOST" id="P0AFB8"/>
<dbReference type="PaxDb" id="511145-b3868"/>
<dbReference type="EnsemblBacteria" id="AAC76865">
    <property type="protein sequence ID" value="AAC76865"/>
    <property type="gene ID" value="b3868"/>
</dbReference>
<dbReference type="GeneID" id="75174103"/>
<dbReference type="GeneID" id="948361"/>
<dbReference type="KEGG" id="ecj:JW3839"/>
<dbReference type="KEGG" id="eco:b3868"/>
<dbReference type="KEGG" id="ecoc:C3026_20910"/>
<dbReference type="PATRIC" id="fig|1411691.4.peg.2843"/>
<dbReference type="EchoBASE" id="EB0380"/>
<dbReference type="eggNOG" id="COG2204">
    <property type="taxonomic scope" value="Bacteria"/>
</dbReference>
<dbReference type="HOGENOM" id="CLU_000445_0_1_6"/>
<dbReference type="InParanoid" id="P0AFB8"/>
<dbReference type="OMA" id="LENICHW"/>
<dbReference type="OrthoDB" id="9804019at2"/>
<dbReference type="PhylomeDB" id="P0AFB8"/>
<dbReference type="BioCyc" id="EcoCyc:PROTEIN-NRI"/>
<dbReference type="PRO" id="PR:P0AFB8"/>
<dbReference type="Proteomes" id="UP000000625">
    <property type="component" value="Chromosome"/>
</dbReference>
<dbReference type="GO" id="GO:0005829">
    <property type="term" value="C:cytosol"/>
    <property type="evidence" value="ECO:0000314"/>
    <property type="project" value="EcoCyc"/>
</dbReference>
<dbReference type="GO" id="GO:0032993">
    <property type="term" value="C:protein-DNA complex"/>
    <property type="evidence" value="ECO:0000318"/>
    <property type="project" value="GO_Central"/>
</dbReference>
<dbReference type="GO" id="GO:0005524">
    <property type="term" value="F:ATP binding"/>
    <property type="evidence" value="ECO:0007669"/>
    <property type="project" value="UniProtKB-KW"/>
</dbReference>
<dbReference type="GO" id="GO:0016887">
    <property type="term" value="F:ATP hydrolysis activity"/>
    <property type="evidence" value="ECO:0007669"/>
    <property type="project" value="InterPro"/>
</dbReference>
<dbReference type="GO" id="GO:0000987">
    <property type="term" value="F:cis-regulatory region sequence-specific DNA binding"/>
    <property type="evidence" value="ECO:0000318"/>
    <property type="project" value="GO_Central"/>
</dbReference>
<dbReference type="GO" id="GO:0001216">
    <property type="term" value="F:DNA-binding transcription activator activity"/>
    <property type="evidence" value="ECO:0000318"/>
    <property type="project" value="GO_Central"/>
</dbReference>
<dbReference type="GO" id="GO:0000156">
    <property type="term" value="F:phosphorelay response regulator activity"/>
    <property type="evidence" value="ECO:0007669"/>
    <property type="project" value="InterPro"/>
</dbReference>
<dbReference type="GO" id="GO:0009399">
    <property type="term" value="P:nitrogen fixation"/>
    <property type="evidence" value="ECO:0007669"/>
    <property type="project" value="UniProtKB-KW"/>
</dbReference>
<dbReference type="GO" id="GO:0045893">
    <property type="term" value="P:positive regulation of DNA-templated transcription"/>
    <property type="evidence" value="ECO:0000318"/>
    <property type="project" value="GO_Central"/>
</dbReference>
<dbReference type="GO" id="GO:0006808">
    <property type="term" value="P:regulation of nitrogen utilization"/>
    <property type="evidence" value="ECO:0007669"/>
    <property type="project" value="InterPro"/>
</dbReference>
<dbReference type="CDD" id="cd00009">
    <property type="entry name" value="AAA"/>
    <property type="match status" value="1"/>
</dbReference>
<dbReference type="CDD" id="cd19919">
    <property type="entry name" value="REC_NtrC"/>
    <property type="match status" value="1"/>
</dbReference>
<dbReference type="FunFam" id="1.10.10.60:FF:000088">
    <property type="entry name" value="DNA-binding transcriptional regulator NtrC"/>
    <property type="match status" value="1"/>
</dbReference>
<dbReference type="FunFam" id="1.10.8.60:FF:000014">
    <property type="entry name" value="DNA-binding transcriptional regulator NtrC"/>
    <property type="match status" value="1"/>
</dbReference>
<dbReference type="FunFam" id="3.40.50.2300:FF:000018">
    <property type="entry name" value="DNA-binding transcriptional regulator NtrC"/>
    <property type="match status" value="1"/>
</dbReference>
<dbReference type="FunFam" id="3.40.50.300:FF:000006">
    <property type="entry name" value="DNA-binding transcriptional regulator NtrC"/>
    <property type="match status" value="1"/>
</dbReference>
<dbReference type="Gene3D" id="1.10.8.60">
    <property type="match status" value="1"/>
</dbReference>
<dbReference type="Gene3D" id="3.40.50.2300">
    <property type="match status" value="1"/>
</dbReference>
<dbReference type="Gene3D" id="1.10.10.60">
    <property type="entry name" value="Homeodomain-like"/>
    <property type="match status" value="1"/>
</dbReference>
<dbReference type="Gene3D" id="3.40.50.300">
    <property type="entry name" value="P-loop containing nucleotide triphosphate hydrolases"/>
    <property type="match status" value="1"/>
</dbReference>
<dbReference type="InterPro" id="IPR003593">
    <property type="entry name" value="AAA+_ATPase"/>
</dbReference>
<dbReference type="InterPro" id="IPR011006">
    <property type="entry name" value="CheY-like_superfamily"/>
</dbReference>
<dbReference type="InterPro" id="IPR009057">
    <property type="entry name" value="Homeodomain-like_sf"/>
</dbReference>
<dbReference type="InterPro" id="IPR002197">
    <property type="entry name" value="HTH_Fis"/>
</dbReference>
<dbReference type="InterPro" id="IPR027417">
    <property type="entry name" value="P-loop_NTPase"/>
</dbReference>
<dbReference type="InterPro" id="IPR001789">
    <property type="entry name" value="Sig_transdc_resp-reg_receiver"/>
</dbReference>
<dbReference type="InterPro" id="IPR002078">
    <property type="entry name" value="Sigma_54_int"/>
</dbReference>
<dbReference type="InterPro" id="IPR025662">
    <property type="entry name" value="Sigma_54_int_dom_ATP-bd_1"/>
</dbReference>
<dbReference type="InterPro" id="IPR025943">
    <property type="entry name" value="Sigma_54_int_dom_ATP-bd_2"/>
</dbReference>
<dbReference type="InterPro" id="IPR025944">
    <property type="entry name" value="Sigma_54_int_dom_CS"/>
</dbReference>
<dbReference type="InterPro" id="IPR010114">
    <property type="entry name" value="Transcript_reg_NtrC"/>
</dbReference>
<dbReference type="NCBIfam" id="TIGR01818">
    <property type="entry name" value="ntrC"/>
    <property type="match status" value="1"/>
</dbReference>
<dbReference type="NCBIfam" id="NF008176">
    <property type="entry name" value="PRK10923.1"/>
    <property type="match status" value="1"/>
</dbReference>
<dbReference type="PANTHER" id="PTHR32071:SF95">
    <property type="entry name" value="DNA-BINDING TRANSCRIPTIONAL REGULATOR NTRC"/>
    <property type="match status" value="1"/>
</dbReference>
<dbReference type="PANTHER" id="PTHR32071">
    <property type="entry name" value="TRANSCRIPTIONAL REGULATORY PROTEIN"/>
    <property type="match status" value="1"/>
</dbReference>
<dbReference type="Pfam" id="PF02954">
    <property type="entry name" value="HTH_8"/>
    <property type="match status" value="1"/>
</dbReference>
<dbReference type="Pfam" id="PF00072">
    <property type="entry name" value="Response_reg"/>
    <property type="match status" value="1"/>
</dbReference>
<dbReference type="Pfam" id="PF00158">
    <property type="entry name" value="Sigma54_activat"/>
    <property type="match status" value="1"/>
</dbReference>
<dbReference type="PRINTS" id="PR01590">
    <property type="entry name" value="HTHFIS"/>
</dbReference>
<dbReference type="SMART" id="SM00382">
    <property type="entry name" value="AAA"/>
    <property type="match status" value="1"/>
</dbReference>
<dbReference type="SMART" id="SM00448">
    <property type="entry name" value="REC"/>
    <property type="match status" value="1"/>
</dbReference>
<dbReference type="SUPFAM" id="SSF52172">
    <property type="entry name" value="CheY-like"/>
    <property type="match status" value="1"/>
</dbReference>
<dbReference type="SUPFAM" id="SSF46689">
    <property type="entry name" value="Homeodomain-like"/>
    <property type="match status" value="1"/>
</dbReference>
<dbReference type="SUPFAM" id="SSF52540">
    <property type="entry name" value="P-loop containing nucleoside triphosphate hydrolases"/>
    <property type="match status" value="1"/>
</dbReference>
<dbReference type="PROSITE" id="PS50110">
    <property type="entry name" value="RESPONSE_REGULATORY"/>
    <property type="match status" value="1"/>
</dbReference>
<dbReference type="PROSITE" id="PS00675">
    <property type="entry name" value="SIGMA54_INTERACT_1"/>
    <property type="match status" value="1"/>
</dbReference>
<dbReference type="PROSITE" id="PS00676">
    <property type="entry name" value="SIGMA54_INTERACT_2"/>
    <property type="match status" value="1"/>
</dbReference>
<dbReference type="PROSITE" id="PS00688">
    <property type="entry name" value="SIGMA54_INTERACT_3"/>
    <property type="match status" value="1"/>
</dbReference>
<dbReference type="PROSITE" id="PS50045">
    <property type="entry name" value="SIGMA54_INTERACT_4"/>
    <property type="match status" value="1"/>
</dbReference>
<comment type="function">
    <text evidence="4 5 7 8 9">Member of the two-component regulatory system NtrB/NtrC, which controls expression of the nitrogen-regulated (ntr) genes in response to nitrogen limitation. Phosphorylated NtrC binds directly to DNA and stimulates the formation of open promoter-sigma54-RNA polymerase complexes (PubMed:1350679, PubMed:2574599, PubMed:2874557, PubMed:3304660). Activates transcription of many genes and operons whose products minimize the slowing of growth under nitrogen-limiting conditions, including genes coding for glutamine synthetase (glnA), transporters, amino acid permeases and catabolic enzymes (PubMed:11121068).</text>
</comment>
<comment type="subunit">
    <text evidence="5 6">Homodimer. Phosphorylation of the N-terminal receiver domain leads to the formation of oligomers (PubMed:1350679). Can also form phosphorylation-independent oligomers (PubMed:15208307).</text>
</comment>
<comment type="interaction">
    <interactant intactId="EBI-1113197">
        <id>P0AFB8</id>
    </interactant>
    <interactant intactId="EBI-548694">
        <id>P0ACZ4</id>
        <label>evgA</label>
    </interactant>
    <organismsDiffer>false</organismsDiffer>
    <experiments>3</experiments>
</comment>
<comment type="interaction">
    <interactant intactId="EBI-1113197">
        <id>P0AFB8</id>
    </interactant>
    <interactant intactId="EBI-701156">
        <id>P0AFB5</id>
        <label>glnL</label>
    </interactant>
    <organismsDiffer>false</organismsDiffer>
    <experiments>3</experiments>
</comment>
<comment type="subcellular location">
    <subcellularLocation>
        <location evidence="12">Cytoplasm</location>
    </subcellularLocation>
</comment>
<comment type="domain">
    <text evidence="13">Contains an N-terminal receiver domain, a central output domain, which hydrolyzes ATP, interacts with RNA polymerase and is required for phosphorylation-dependent oligomerization, and a C-terminal domain, which is involved in DNA binding, dimerization and phosphorylation-independent oligomerization.</text>
</comment>
<comment type="PTM">
    <text evidence="5 7 8">Phosphorylated and dephosphorylated by NtrB (PubMed:2574599, PubMed:2874557). Phosphorylation induces strong cooperative binding to DNA (PubMed:1350679).</text>
</comment>
<protein>
    <recommendedName>
        <fullName evidence="12">DNA-binding transcriptional regulator NtrC</fullName>
    </recommendedName>
    <alternativeName>
        <fullName evidence="12">Nitrogen regulation protein NR(I)</fullName>
    </alternativeName>
    <alternativeName>
        <fullName evidence="10">Nitrogen regulator I</fullName>
        <shortName evidence="10">NRI</shortName>
    </alternativeName>
</protein>
<gene>
    <name evidence="11" type="primary">glnG</name>
    <name type="synonym">glnT</name>
    <name evidence="11" type="synonym">ntrC</name>
    <name type="ordered locus">b3868</name>
    <name type="ordered locus">JW3839</name>
</gene>
<accession>P0AFB8</accession>
<accession>P06713</accession>
<accession>Q2M8G5</accession>
<evidence type="ECO:0000250" key="1"/>
<evidence type="ECO:0000255" key="2">
    <source>
        <dbReference type="PROSITE-ProRule" id="PRU00169"/>
    </source>
</evidence>
<evidence type="ECO:0000255" key="3">
    <source>
        <dbReference type="PROSITE-ProRule" id="PRU00193"/>
    </source>
</evidence>
<evidence type="ECO:0000269" key="4">
    <source>
    </source>
</evidence>
<evidence type="ECO:0000269" key="5">
    <source>
    </source>
</evidence>
<evidence type="ECO:0000269" key="6">
    <source>
    </source>
</evidence>
<evidence type="ECO:0000269" key="7">
    <source>
    </source>
</evidence>
<evidence type="ECO:0000269" key="8">
    <source>
    </source>
</evidence>
<evidence type="ECO:0000269" key="9">
    <source>
    </source>
</evidence>
<evidence type="ECO:0000303" key="10">
    <source>
    </source>
</evidence>
<evidence type="ECO:0000303" key="11">
    <source>
    </source>
</evidence>
<evidence type="ECO:0000305" key="12"/>
<evidence type="ECO:0000305" key="13">
    <source>
    </source>
</evidence>
<keyword id="KW-0010">Activator</keyword>
<keyword id="KW-0067">ATP-binding</keyword>
<keyword id="KW-0963">Cytoplasm</keyword>
<keyword id="KW-0238">DNA-binding</keyword>
<keyword id="KW-0535">Nitrogen fixation</keyword>
<keyword id="KW-0547">Nucleotide-binding</keyword>
<keyword id="KW-0597">Phosphoprotein</keyword>
<keyword id="KW-1185">Reference proteome</keyword>
<keyword id="KW-0678">Repressor</keyword>
<keyword id="KW-0804">Transcription</keyword>
<keyword id="KW-0805">Transcription regulation</keyword>
<keyword id="KW-0902">Two-component regulatory system</keyword>
<feature type="chain" id="PRO_0000081165" description="DNA-binding transcriptional regulator NtrC">
    <location>
        <begin position="1"/>
        <end position="469"/>
    </location>
</feature>
<feature type="domain" description="Response regulatory" evidence="2">
    <location>
        <begin position="5"/>
        <end position="119"/>
    </location>
</feature>
<feature type="domain" description="Sigma-54 factor interaction" evidence="3">
    <location>
        <begin position="140"/>
        <end position="369"/>
    </location>
</feature>
<feature type="DNA-binding region" description="H-T-H motif" evidence="1">
    <location>
        <begin position="445"/>
        <end position="464"/>
    </location>
</feature>
<feature type="binding site" evidence="3">
    <location>
        <begin position="168"/>
        <end position="175"/>
    </location>
    <ligand>
        <name>ATP</name>
        <dbReference type="ChEBI" id="CHEBI:30616"/>
    </ligand>
</feature>
<feature type="binding site" evidence="3">
    <location>
        <begin position="231"/>
        <end position="240"/>
    </location>
    <ligand>
        <name>ATP</name>
        <dbReference type="ChEBI" id="CHEBI:30616"/>
    </ligand>
</feature>
<feature type="modified residue" description="4-aspartylphosphate" evidence="2">
    <location>
        <position position="54"/>
    </location>
</feature>
<feature type="sequence conflict" description="In Ref. 1; CAA28808." evidence="12" ref="1">
    <original>GEA</original>
    <variation>AK</variation>
    <location>
        <begin position="142"/>
        <end position="144"/>
    </location>
</feature>
<reference key="1">
    <citation type="journal article" date="1987" name="Nucleic Acids Res.">
        <title>The complete nucleotide sequence of the glnALG operon of Escherichia coli K12.</title>
        <authorList>
            <person name="Miranda-Rios J."/>
            <person name="Sanchez-Pescador R."/>
            <person name="Urdea M."/>
            <person name="Covarrubias A.A."/>
        </authorList>
    </citation>
    <scope>NUCLEOTIDE SEQUENCE [GENOMIC DNA]</scope>
    <source>
        <strain>K12</strain>
    </source>
</reference>
<reference key="2">
    <citation type="journal article" date="1993" name="Nucleic Acids Res.">
        <title>Analysis of the Escherichia coli genome. III. DNA sequence of the region from 87.2 to 89.2 minutes.</title>
        <authorList>
            <person name="Plunkett G. III"/>
            <person name="Burland V."/>
            <person name="Daniels D.L."/>
            <person name="Blattner F.R."/>
        </authorList>
    </citation>
    <scope>NUCLEOTIDE SEQUENCE [LARGE SCALE GENOMIC DNA]</scope>
    <source>
        <strain>K12 / MG1655 / ATCC 47076</strain>
    </source>
</reference>
<reference key="3">
    <citation type="journal article" date="1997" name="Science">
        <title>The complete genome sequence of Escherichia coli K-12.</title>
        <authorList>
            <person name="Blattner F.R."/>
            <person name="Plunkett G. III"/>
            <person name="Bloch C.A."/>
            <person name="Perna N.T."/>
            <person name="Burland V."/>
            <person name="Riley M."/>
            <person name="Collado-Vides J."/>
            <person name="Glasner J.D."/>
            <person name="Rode C.K."/>
            <person name="Mayhew G.F."/>
            <person name="Gregor J."/>
            <person name="Davis N.W."/>
            <person name="Kirkpatrick H.A."/>
            <person name="Goeden M.A."/>
            <person name="Rose D.J."/>
            <person name="Mau B."/>
            <person name="Shao Y."/>
        </authorList>
    </citation>
    <scope>NUCLEOTIDE SEQUENCE [LARGE SCALE GENOMIC DNA]</scope>
    <source>
        <strain>K12 / MG1655 / ATCC 47076</strain>
    </source>
</reference>
<reference key="4">
    <citation type="journal article" date="2006" name="Mol. Syst. Biol.">
        <title>Highly accurate genome sequences of Escherichia coli K-12 strains MG1655 and W3110.</title>
        <authorList>
            <person name="Hayashi K."/>
            <person name="Morooka N."/>
            <person name="Yamamoto Y."/>
            <person name="Fujita K."/>
            <person name="Isono K."/>
            <person name="Choi S."/>
            <person name="Ohtsubo E."/>
            <person name="Baba T."/>
            <person name="Wanner B.L."/>
            <person name="Mori H."/>
            <person name="Horiuchi T."/>
        </authorList>
    </citation>
    <scope>NUCLEOTIDE SEQUENCE [LARGE SCALE GENOMIC DNA]</scope>
    <source>
        <strain>K12 / W3110 / ATCC 27325 / DSM 5911</strain>
    </source>
</reference>
<reference key="5">
    <citation type="submission" date="1994-09" db="EMBL/GenBank/DDBJ databases">
        <authorList>
            <person name="Wachi M."/>
            <person name="Hamano-Takaku F."/>
            <person name="Nagano K."/>
            <person name="Kobayashi M."/>
            <person name="Yukawa H."/>
            <person name="Nagai K."/>
        </authorList>
    </citation>
    <scope>NUCLEOTIDE SEQUENCE [GENOMIC DNA] OF 401-469</scope>
    <source>
        <strain>K12</strain>
    </source>
</reference>
<reference key="6">
    <citation type="journal article" date="1986" name="Proc. Natl. Acad. Sci. U.S.A.">
        <title>Covalent modification of the glnG product, NRI, by the glnL product, NRII, regulates the transcription of the glnALG operon in Escherichia coli.</title>
        <authorList>
            <person name="Ninfa A.J."/>
            <person name="Magasanik B."/>
        </authorList>
    </citation>
    <scope>FUNCTION</scope>
    <scope>PHOSPHORYLATION</scope>
</reference>
<reference key="7">
    <citation type="journal article" date="1987" name="Cell">
        <title>Initiation of transcription at the bacterial glnAp2 promoter by purified E. coli components is facilitated by enhancers.</title>
        <authorList>
            <person name="Ninfa A.J."/>
            <person name="Reitzer L.J."/>
            <person name="Magasanik B."/>
        </authorList>
    </citation>
    <scope>FUNCTION</scope>
    <scope>DNA-BINDING</scope>
</reference>
<reference key="8">
    <citation type="journal article" date="1989" name="Biochimie">
        <title>Regulation of transcription of the glnALG operon of Escherichia coli by protein phosphorylation.</title>
        <authorList>
            <person name="Magasanik B."/>
        </authorList>
    </citation>
    <scope>FUNCTION</scope>
    <scope>PHOSPHORYLATION</scope>
</reference>
<reference key="9">
    <citation type="journal article" date="1992" name="Proc. Natl. Acad. Sci. U.S.A.">
        <title>Phosphorylation of nitrogen regulator I of Escherichia coli induces strong cooperative binding to DNA essential for activation of transcription.</title>
        <authorList>
            <person name="Weiss V."/>
            <person name="Claverie-Martin F."/>
            <person name="Magasanik B."/>
        </authorList>
    </citation>
    <scope>FUNCTION</scope>
    <scope>SUBUNIT</scope>
    <scope>PHOSPHORYLATION</scope>
</reference>
<reference key="10">
    <citation type="journal article" date="2000" name="Proc. Natl. Acad. Sci. U.S.A.">
        <title>Nitrogen regulatory protein C-controlled genes of Escherichia coli: scavenging as a defense against nitrogen limitation.</title>
        <authorList>
            <person name="Zimmer D.P."/>
            <person name="Soupene E."/>
            <person name="Lee H.L."/>
            <person name="Wendisch V.F."/>
            <person name="Khodursky A.B."/>
            <person name="Peter B.J."/>
            <person name="Bender R.A."/>
            <person name="Kustu S."/>
        </authorList>
    </citation>
    <scope>FUNCTION</scope>
</reference>
<reference key="11">
    <citation type="journal article" date="2004" name="J. Biol. Chem.">
        <title>Phosphorylation-independent dimer-dimer interactions by the enhancer-binding activator NtrC of Escherichia coli: a third function for the C-terminal domain.</title>
        <authorList>
            <person name="Yang X.F."/>
            <person name="Ji Y."/>
            <person name="Schneider B.L."/>
            <person name="Reitzer L."/>
        </authorList>
    </citation>
    <scope>SUBUNIT</scope>
    <scope>DOMAIN</scope>
    <source>
        <strain>K12 / W3110 / ATCC 27325 / DSM 5911</strain>
    </source>
</reference>
<name>NTRC_ECOLI</name>
<sequence length="469" mass="52255">MQRGIVWVVDDDSSIRWVLERALAGAGLTCTTFENGAEVLEALASKTPDVLLSDIRMPGMDGLALLKQIKQRHPMLPVIIMTAHSDLDAAVSAYQQGAFDYLPKPFDIDEAVALVERAISHYQEQQQPRNVQLNGPTTDIIGEAPAMQDVFRIIGRLSRSSISVLINGESGTGKELVAHALHRHSPRAKAPFIALNMAAIPKDLIESELFGHEKGAFTGANTIRQGRFEQADGGTLFLDEIGDMPLDVQTRLLRVLADGQFYRVGGYAPVKVDVRIIAATHQNLEQRVQEGKFREDLFHRLNVIRVHLPPLRERREDIPRLARHFLQVAARELGVEAKLLHPETEAALTRLAWPGNVRQLENTCRWLTVMAAGQEVLIQDLPGELFESTVAESTSQMQPDSWATLLAQWADRALRSGHQNLLSEAQPELERTLLTTALRHTQGHKQEAARLLGWGRNTLTRKLKELGME</sequence>